<proteinExistence type="evidence at protein level"/>
<reference key="1">
    <citation type="journal article" date="2005" name="Science">
        <title>The transcriptional landscape of the mammalian genome.</title>
        <authorList>
            <person name="Carninci P."/>
            <person name="Kasukawa T."/>
            <person name="Katayama S."/>
            <person name="Gough J."/>
            <person name="Frith M.C."/>
            <person name="Maeda N."/>
            <person name="Oyama R."/>
            <person name="Ravasi T."/>
            <person name="Lenhard B."/>
            <person name="Wells C."/>
            <person name="Kodzius R."/>
            <person name="Shimokawa K."/>
            <person name="Bajic V.B."/>
            <person name="Brenner S.E."/>
            <person name="Batalov S."/>
            <person name="Forrest A.R."/>
            <person name="Zavolan M."/>
            <person name="Davis M.J."/>
            <person name="Wilming L.G."/>
            <person name="Aidinis V."/>
            <person name="Allen J.E."/>
            <person name="Ambesi-Impiombato A."/>
            <person name="Apweiler R."/>
            <person name="Aturaliya R.N."/>
            <person name="Bailey T.L."/>
            <person name="Bansal M."/>
            <person name="Baxter L."/>
            <person name="Beisel K.W."/>
            <person name="Bersano T."/>
            <person name="Bono H."/>
            <person name="Chalk A.M."/>
            <person name="Chiu K.P."/>
            <person name="Choudhary V."/>
            <person name="Christoffels A."/>
            <person name="Clutterbuck D.R."/>
            <person name="Crowe M.L."/>
            <person name="Dalla E."/>
            <person name="Dalrymple B.P."/>
            <person name="de Bono B."/>
            <person name="Della Gatta G."/>
            <person name="di Bernardo D."/>
            <person name="Down T."/>
            <person name="Engstrom P."/>
            <person name="Fagiolini M."/>
            <person name="Faulkner G."/>
            <person name="Fletcher C.F."/>
            <person name="Fukushima T."/>
            <person name="Furuno M."/>
            <person name="Futaki S."/>
            <person name="Gariboldi M."/>
            <person name="Georgii-Hemming P."/>
            <person name="Gingeras T.R."/>
            <person name="Gojobori T."/>
            <person name="Green R.E."/>
            <person name="Gustincich S."/>
            <person name="Harbers M."/>
            <person name="Hayashi Y."/>
            <person name="Hensch T.K."/>
            <person name="Hirokawa N."/>
            <person name="Hill D."/>
            <person name="Huminiecki L."/>
            <person name="Iacono M."/>
            <person name="Ikeo K."/>
            <person name="Iwama A."/>
            <person name="Ishikawa T."/>
            <person name="Jakt M."/>
            <person name="Kanapin A."/>
            <person name="Katoh M."/>
            <person name="Kawasawa Y."/>
            <person name="Kelso J."/>
            <person name="Kitamura H."/>
            <person name="Kitano H."/>
            <person name="Kollias G."/>
            <person name="Krishnan S.P."/>
            <person name="Kruger A."/>
            <person name="Kummerfeld S.K."/>
            <person name="Kurochkin I.V."/>
            <person name="Lareau L.F."/>
            <person name="Lazarevic D."/>
            <person name="Lipovich L."/>
            <person name="Liu J."/>
            <person name="Liuni S."/>
            <person name="McWilliam S."/>
            <person name="Madan Babu M."/>
            <person name="Madera M."/>
            <person name="Marchionni L."/>
            <person name="Matsuda H."/>
            <person name="Matsuzawa S."/>
            <person name="Miki H."/>
            <person name="Mignone F."/>
            <person name="Miyake S."/>
            <person name="Morris K."/>
            <person name="Mottagui-Tabar S."/>
            <person name="Mulder N."/>
            <person name="Nakano N."/>
            <person name="Nakauchi H."/>
            <person name="Ng P."/>
            <person name="Nilsson R."/>
            <person name="Nishiguchi S."/>
            <person name="Nishikawa S."/>
            <person name="Nori F."/>
            <person name="Ohara O."/>
            <person name="Okazaki Y."/>
            <person name="Orlando V."/>
            <person name="Pang K.C."/>
            <person name="Pavan W.J."/>
            <person name="Pavesi G."/>
            <person name="Pesole G."/>
            <person name="Petrovsky N."/>
            <person name="Piazza S."/>
            <person name="Reed J."/>
            <person name="Reid J.F."/>
            <person name="Ring B.Z."/>
            <person name="Ringwald M."/>
            <person name="Rost B."/>
            <person name="Ruan Y."/>
            <person name="Salzberg S.L."/>
            <person name="Sandelin A."/>
            <person name="Schneider C."/>
            <person name="Schoenbach C."/>
            <person name="Sekiguchi K."/>
            <person name="Semple C.A."/>
            <person name="Seno S."/>
            <person name="Sessa L."/>
            <person name="Sheng Y."/>
            <person name="Shibata Y."/>
            <person name="Shimada H."/>
            <person name="Shimada K."/>
            <person name="Silva D."/>
            <person name="Sinclair B."/>
            <person name="Sperling S."/>
            <person name="Stupka E."/>
            <person name="Sugiura K."/>
            <person name="Sultana R."/>
            <person name="Takenaka Y."/>
            <person name="Taki K."/>
            <person name="Tammoja K."/>
            <person name="Tan S.L."/>
            <person name="Tang S."/>
            <person name="Taylor M.S."/>
            <person name="Tegner J."/>
            <person name="Teichmann S.A."/>
            <person name="Ueda H.R."/>
            <person name="van Nimwegen E."/>
            <person name="Verardo R."/>
            <person name="Wei C.L."/>
            <person name="Yagi K."/>
            <person name="Yamanishi H."/>
            <person name="Zabarovsky E."/>
            <person name="Zhu S."/>
            <person name="Zimmer A."/>
            <person name="Hide W."/>
            <person name="Bult C."/>
            <person name="Grimmond S.M."/>
            <person name="Teasdale R.D."/>
            <person name="Liu E.T."/>
            <person name="Brusic V."/>
            <person name="Quackenbush J."/>
            <person name="Wahlestedt C."/>
            <person name="Mattick J.S."/>
            <person name="Hume D.A."/>
            <person name="Kai C."/>
            <person name="Sasaki D."/>
            <person name="Tomaru Y."/>
            <person name="Fukuda S."/>
            <person name="Kanamori-Katayama M."/>
            <person name="Suzuki M."/>
            <person name="Aoki J."/>
            <person name="Arakawa T."/>
            <person name="Iida J."/>
            <person name="Imamura K."/>
            <person name="Itoh M."/>
            <person name="Kato T."/>
            <person name="Kawaji H."/>
            <person name="Kawagashira N."/>
            <person name="Kawashima T."/>
            <person name="Kojima M."/>
            <person name="Kondo S."/>
            <person name="Konno H."/>
            <person name="Nakano K."/>
            <person name="Ninomiya N."/>
            <person name="Nishio T."/>
            <person name="Okada M."/>
            <person name="Plessy C."/>
            <person name="Shibata K."/>
            <person name="Shiraki T."/>
            <person name="Suzuki S."/>
            <person name="Tagami M."/>
            <person name="Waki K."/>
            <person name="Watahiki A."/>
            <person name="Okamura-Oho Y."/>
            <person name="Suzuki H."/>
            <person name="Kawai J."/>
            <person name="Hayashizaki Y."/>
        </authorList>
    </citation>
    <scope>NUCLEOTIDE SEQUENCE [LARGE SCALE MRNA]</scope>
    <source>
        <strain evidence="4">C57BL/6J</strain>
        <strain evidence="8">NOD</strain>
        <tissue evidence="4">Embryo</tissue>
        <tissue evidence="5">Embryonic liver</tissue>
        <tissue evidence="9">Head</tissue>
        <tissue evidence="6">Olfactory bulb</tissue>
        <tissue evidence="7">Pancreatic islet</tissue>
        <tissue evidence="8">Thymus</tissue>
    </source>
</reference>
<reference key="2">
    <citation type="journal article" date="2004" name="Mol. Cell. Proteomics">
        <title>Phosphoproteomic analysis of the developing mouse brain.</title>
        <authorList>
            <person name="Ballif B.A."/>
            <person name="Villen J."/>
            <person name="Beausoleil S.A."/>
            <person name="Schwartz D."/>
            <person name="Gygi S.P."/>
        </authorList>
    </citation>
    <scope>PHOSPHORYLATION [LARGE SCALE ANALYSIS] AT SER-132 AND SER-133</scope>
    <scope>IDENTIFICATION BY MASS SPECTROMETRY [LARGE SCALE ANALYSIS]</scope>
    <source>
        <tissue>Embryonic brain</tissue>
    </source>
</reference>
<reference key="3">
    <citation type="journal article" date="2007" name="Proc. Natl. Acad. Sci. U.S.A.">
        <title>Large-scale phosphorylation analysis of mouse liver.</title>
        <authorList>
            <person name="Villen J."/>
            <person name="Beausoleil S.A."/>
            <person name="Gerber S.A."/>
            <person name="Gygi S.P."/>
        </authorList>
    </citation>
    <scope>PHOSPHORYLATION [LARGE SCALE ANALYSIS] AT SER-52; SER-53; SER-116 AND SER-132</scope>
    <scope>IDENTIFICATION BY MASS SPECTROMETRY [LARGE SCALE ANALYSIS]</scope>
    <source>
        <tissue>Liver</tissue>
    </source>
</reference>
<reference key="4">
    <citation type="journal article" date="2009" name="Immunity">
        <title>The phagosomal proteome in interferon-gamma-activated macrophages.</title>
        <authorList>
            <person name="Trost M."/>
            <person name="English L."/>
            <person name="Lemieux S."/>
            <person name="Courcelles M."/>
            <person name="Desjardins M."/>
            <person name="Thibault P."/>
        </authorList>
    </citation>
    <scope>PHOSPHORYLATION [LARGE SCALE ANALYSIS] AT SER-132 AND SER-133</scope>
    <scope>IDENTIFICATION BY MASS SPECTROMETRY [LARGE SCALE ANALYSIS]</scope>
</reference>
<reference key="5">
    <citation type="journal article" date="2009" name="Mol. Cell. Proteomics">
        <title>Large scale localization of protein phosphorylation by use of electron capture dissociation mass spectrometry.</title>
        <authorList>
            <person name="Sweet S.M."/>
            <person name="Bailey C.M."/>
            <person name="Cunningham D.L."/>
            <person name="Heath J.K."/>
            <person name="Cooper H.J."/>
        </authorList>
    </citation>
    <scope>PHOSPHORYLATION [LARGE SCALE ANALYSIS] AT THR-267</scope>
    <scope>IDENTIFICATION BY MASS SPECTROMETRY [LARGE SCALE ANALYSIS]</scope>
    <source>
        <tissue>Embryonic fibroblast</tissue>
    </source>
</reference>
<reference key="6">
    <citation type="journal article" date="2010" name="Cell">
        <title>A tissue-specific atlas of mouse protein phosphorylation and expression.</title>
        <authorList>
            <person name="Huttlin E.L."/>
            <person name="Jedrychowski M.P."/>
            <person name="Elias J.E."/>
            <person name="Goswami T."/>
            <person name="Rad R."/>
            <person name="Beausoleil S.A."/>
            <person name="Villen J."/>
            <person name="Haas W."/>
            <person name="Sowa M.E."/>
            <person name="Gygi S.P."/>
        </authorList>
    </citation>
    <scope>PHOSPHORYLATION [LARGE SCALE ANALYSIS] AT SER-52; SER-53; SER-116; SER-132 AND THR-267</scope>
    <scope>IDENTIFICATION BY MASS SPECTROMETRY [LARGE SCALE ANALYSIS]</scope>
    <source>
        <tissue>Brain</tissue>
        <tissue>Brown adipose tissue</tissue>
        <tissue>Heart</tissue>
        <tissue>Kidney</tissue>
        <tissue>Liver</tissue>
        <tissue>Lung</tissue>
        <tissue>Pancreas</tissue>
        <tissue>Spleen</tissue>
        <tissue>Testis</tissue>
    </source>
</reference>
<name>MFA1A_MOUSE</name>
<accession>C0HKD8</accession>
<accession>Q3TU29</accession>
<accession>Q8CCL1</accession>
<accession>Q9CQU1</accession>
<accession>Q9CSJ5</accession>
<dbReference type="EMBL" id="AK012688">
    <property type="protein sequence ID" value="BAB28412.3"/>
    <property type="molecule type" value="mRNA"/>
</dbReference>
<dbReference type="EMBL" id="AK014483">
    <property type="protein sequence ID" value="BAB29385.1"/>
    <property type="molecule type" value="mRNA"/>
</dbReference>
<dbReference type="EMBL" id="AK032586">
    <property type="protein sequence ID" value="BAC27936.1"/>
    <property type="status" value="ALT_TERM"/>
    <property type="molecule type" value="mRNA"/>
</dbReference>
<dbReference type="EMBL" id="AK050561">
    <property type="protein sequence ID" value="BAC34325.1"/>
    <property type="molecule type" value="mRNA"/>
</dbReference>
<dbReference type="EMBL" id="AK077604">
    <property type="protein sequence ID" value="BAC36894.1"/>
    <property type="molecule type" value="mRNA"/>
</dbReference>
<dbReference type="EMBL" id="AK088766">
    <property type="protein sequence ID" value="BAC40557.1"/>
    <property type="molecule type" value="mRNA"/>
</dbReference>
<dbReference type="EMBL" id="AK161000">
    <property type="protein sequence ID" value="BAE36142.1"/>
    <property type="molecule type" value="mRNA"/>
</dbReference>
<dbReference type="CCDS" id="CCDS16648.1"/>
<dbReference type="RefSeq" id="NP_001075444.1">
    <property type="nucleotide sequence ID" value="NM_001081975.3"/>
</dbReference>
<dbReference type="RefSeq" id="NP_080496.1">
    <property type="nucleotide sequence ID" value="NM_026220.4"/>
</dbReference>
<dbReference type="SMR" id="C0HKD8"/>
<dbReference type="FunCoup" id="C0HKD8">
    <property type="interactions" value="2409"/>
</dbReference>
<dbReference type="STRING" id="10090.ENSMUSP00000049548"/>
<dbReference type="GlyGen" id="C0HKD8">
    <property type="glycosylation" value="1 site, 1 N-linked glycan (1 site)"/>
</dbReference>
<dbReference type="iPTMnet" id="C0HKD8"/>
<dbReference type="PhosphoSitePlus" id="C0HKD8"/>
<dbReference type="jPOST" id="C0HKD8"/>
<dbReference type="PaxDb" id="10090-ENSMUSP00000049548"/>
<dbReference type="ProteomicsDB" id="292225"/>
<dbReference type="Pumba" id="C0HKD8"/>
<dbReference type="DNASU" id="67532"/>
<dbReference type="Ensembl" id="ENSMUST00000056732.4">
    <property type="protein sequence ID" value="ENSMUSP00000049548.4"/>
    <property type="gene ID" value="ENSMUSG00000048222.4"/>
</dbReference>
<dbReference type="Ensembl" id="ENSMUST00000089926.6">
    <property type="protein sequence ID" value="ENSMUSP00000087372.6"/>
    <property type="gene ID" value="ENSMUSG00000068479.6"/>
</dbReference>
<dbReference type="GeneID" id="100034361"/>
<dbReference type="GeneID" id="67532"/>
<dbReference type="KEGG" id="mmu:100034361"/>
<dbReference type="KEGG" id="mmu:67532"/>
<dbReference type="AGR" id="MGI:1914782"/>
<dbReference type="CTD" id="100034361"/>
<dbReference type="CTD" id="67532"/>
<dbReference type="MGI" id="MGI:1914782">
    <property type="gene designation" value="Mfap1a"/>
</dbReference>
<dbReference type="VEuPathDB" id="HostDB:ENSMUSG00000048222"/>
<dbReference type="VEuPathDB" id="HostDB:ENSMUSG00000068479"/>
<dbReference type="eggNOG" id="KOG1425">
    <property type="taxonomic scope" value="Eukaryota"/>
</dbReference>
<dbReference type="InParanoid" id="C0HKD8"/>
<dbReference type="OMA" id="FHNERAG"/>
<dbReference type="OrthoDB" id="1111734at2759"/>
<dbReference type="Reactome" id="R-MMU-72163">
    <property type="pathway name" value="mRNA Splicing - Major Pathway"/>
</dbReference>
<dbReference type="BioGRID-ORCS" id="100034361">
    <property type="hits" value="14 hits in 37 CRISPR screens"/>
</dbReference>
<dbReference type="BioGRID-ORCS" id="67532">
    <property type="hits" value="10 hits in 35 CRISPR screens"/>
</dbReference>
<dbReference type="ChiTaRS" id="Mfap1a">
    <property type="organism name" value="mouse"/>
</dbReference>
<dbReference type="PRO" id="PR:C0HKD8"/>
<dbReference type="Proteomes" id="UP000000589">
    <property type="component" value="Chromosome 2"/>
</dbReference>
<dbReference type="RNAct" id="C0HKD8">
    <property type="molecule type" value="protein"/>
</dbReference>
<dbReference type="Bgee" id="ENSMUSG00000048222">
    <property type="expression patterns" value="Expressed in animal zygote and 79 other cell types or tissues"/>
</dbReference>
<dbReference type="ExpressionAtlas" id="C0HKD8">
    <property type="expression patterns" value="baseline and differential"/>
</dbReference>
<dbReference type="GO" id="GO:0062023">
    <property type="term" value="C:collagen-containing extracellular matrix"/>
    <property type="evidence" value="ECO:0007005"/>
    <property type="project" value="BHF-UCL"/>
</dbReference>
<dbReference type="GO" id="GO:0005634">
    <property type="term" value="C:nucleus"/>
    <property type="evidence" value="ECO:0000250"/>
    <property type="project" value="UniProtKB"/>
</dbReference>
<dbReference type="GO" id="GO:0071005">
    <property type="term" value="C:U2-type precatalytic spliceosome"/>
    <property type="evidence" value="ECO:0000250"/>
    <property type="project" value="UniProtKB"/>
</dbReference>
<dbReference type="GO" id="GO:0000398">
    <property type="term" value="P:mRNA splicing, via spliceosome"/>
    <property type="evidence" value="ECO:0000250"/>
    <property type="project" value="UniProtKB"/>
</dbReference>
<dbReference type="InterPro" id="IPR033194">
    <property type="entry name" value="MFAP1"/>
</dbReference>
<dbReference type="InterPro" id="IPR009730">
    <property type="entry name" value="MFAP1_C"/>
</dbReference>
<dbReference type="PANTHER" id="PTHR15327">
    <property type="entry name" value="MICROFIBRIL-ASSOCIATED PROTEIN"/>
    <property type="match status" value="1"/>
</dbReference>
<dbReference type="Pfam" id="PF06991">
    <property type="entry name" value="MFAP1"/>
    <property type="match status" value="1"/>
</dbReference>
<gene>
    <name evidence="10" type="primary">Mfap1a</name>
</gene>
<sequence length="439" mass="51954">MSVPSALMKQPPIQSTAGAVPVRNEKGEISMEKVKVKRYVSGKRPDYAPMESSDEEDEEFQFIKKAKEQEAEPEEQEEDSSSDPRLRRLQNRISEDVEERLARHRKIVEPEVVGESDSEVEGDAWRLEREDSSEEEEEEIDDEEIERRRGMMRQRAQERKNEEMEVMEVEDEGRSGEESESESEYEEYTDSEDEMEPRLKPVFIRKKDRVTVQEREAEALKQKELEQEAKRMAEERRKYTLKIVEEETKKELEENKRSLAALDALNTDDENDEEEYEAWKVRELKRIKREREDREALEKEKAEIERMRNLTEEERRAELRANGKVITNKAVKGKYKFLQKYYHRGAFFMDEDEEVYKRDFSAPTLEDHFNKTILPKVMQVKNFGRSGRTKYTHLVDQDTTSFDSAWGQESAQNTKFFKQKAAGVRDVFERPSAKKRKTT</sequence>
<protein>
    <recommendedName>
        <fullName evidence="10">Microfibrillar-associated protein 1A</fullName>
    </recommendedName>
    <alternativeName>
        <fullName evidence="3">Spliceosome B complex protein MFAP1A</fullName>
    </alternativeName>
</protein>
<organism>
    <name type="scientific">Mus musculus</name>
    <name type="common">Mouse</name>
    <dbReference type="NCBI Taxonomy" id="10090"/>
    <lineage>
        <taxon>Eukaryota</taxon>
        <taxon>Metazoa</taxon>
        <taxon>Chordata</taxon>
        <taxon>Craniata</taxon>
        <taxon>Vertebrata</taxon>
        <taxon>Euteleostomi</taxon>
        <taxon>Mammalia</taxon>
        <taxon>Eutheria</taxon>
        <taxon>Euarchontoglires</taxon>
        <taxon>Glires</taxon>
        <taxon>Rodentia</taxon>
        <taxon>Myomorpha</taxon>
        <taxon>Muroidea</taxon>
        <taxon>Muridae</taxon>
        <taxon>Murinae</taxon>
        <taxon>Mus</taxon>
        <taxon>Mus</taxon>
    </lineage>
</organism>
<feature type="initiator methionine" description="Removed" evidence="1">
    <location>
        <position position="1"/>
    </location>
</feature>
<feature type="chain" id="PRO_0000096459" description="Microfibrillar-associated protein 1A">
    <location>
        <begin position="2"/>
        <end position="439"/>
    </location>
</feature>
<feature type="region of interest" description="Disordered" evidence="2">
    <location>
        <begin position="1"/>
        <end position="200"/>
    </location>
</feature>
<feature type="compositionally biased region" description="Basic and acidic residues" evidence="2">
    <location>
        <begin position="23"/>
        <end position="34"/>
    </location>
</feature>
<feature type="compositionally biased region" description="Basic and acidic residues" evidence="2">
    <location>
        <begin position="61"/>
        <end position="70"/>
    </location>
</feature>
<feature type="compositionally biased region" description="Acidic residues" evidence="2">
    <location>
        <begin position="71"/>
        <end position="81"/>
    </location>
</feature>
<feature type="compositionally biased region" description="Acidic residues" evidence="2">
    <location>
        <begin position="112"/>
        <end position="122"/>
    </location>
</feature>
<feature type="compositionally biased region" description="Acidic residues" evidence="2">
    <location>
        <begin position="131"/>
        <end position="144"/>
    </location>
</feature>
<feature type="compositionally biased region" description="Basic and acidic residues" evidence="2">
    <location>
        <begin position="145"/>
        <end position="163"/>
    </location>
</feature>
<feature type="compositionally biased region" description="Acidic residues" evidence="2">
    <location>
        <begin position="178"/>
        <end position="195"/>
    </location>
</feature>
<feature type="modified residue" description="N-acetylserine" evidence="1">
    <location>
        <position position="2"/>
    </location>
</feature>
<feature type="modified residue" description="Phosphoserine" evidence="12 15">
    <location>
        <position position="52"/>
    </location>
</feature>
<feature type="modified residue" description="Phosphoserine" evidence="12 15">
    <location>
        <position position="53"/>
    </location>
</feature>
<feature type="modified residue" description="Phosphoserine" evidence="1">
    <location>
        <position position="94"/>
    </location>
</feature>
<feature type="modified residue" description="Phosphoserine" evidence="12 15">
    <location>
        <position position="116"/>
    </location>
</feature>
<feature type="modified residue" description="Phosphoserine" evidence="1">
    <location>
        <position position="118"/>
    </location>
</feature>
<feature type="modified residue" description="Phosphoserine" evidence="11 12 14 15">
    <location>
        <position position="132"/>
    </location>
</feature>
<feature type="modified residue" description="Phosphoserine" evidence="11 14">
    <location>
        <position position="133"/>
    </location>
</feature>
<feature type="modified residue" description="Phosphothreonine" evidence="13 15">
    <location>
        <position position="267"/>
    </location>
</feature>
<feature type="modified residue" description="Phosphoserine" evidence="1">
    <location>
        <position position="361"/>
    </location>
</feature>
<feature type="modified residue" description="Phosphoserine" evidence="1">
    <location>
        <position position="432"/>
    </location>
</feature>
<feature type="cross-link" description="Glycyl lysine isopeptide (Lys-Gly) (interchain with G-Cter in SUMO2)" evidence="1">
    <location>
        <position position="67"/>
    </location>
</feature>
<feature type="cross-link" description="Glycyl lysine isopeptide (Lys-Gly) (interchain with G-Cter in SUMO2)" evidence="1">
    <location>
        <position position="249"/>
    </location>
</feature>
<feature type="cross-link" description="Glycyl lysine isopeptide (Lys-Gly) (interchain with G-Cter in SUMO2)" evidence="1">
    <location>
        <position position="357"/>
    </location>
</feature>
<feature type="cross-link" description="Glycyl lysine isopeptide (Lys-Gly) (interchain with G-Cter in SUMO2)" evidence="1">
    <location>
        <position position="371"/>
    </location>
</feature>
<feature type="cross-link" description="Glycyl lysine isopeptide (Lys-Gly) (interchain with G-Cter in SUMO2)" evidence="1">
    <location>
        <position position="381"/>
    </location>
</feature>
<feature type="cross-link" description="Glycyl lysine isopeptide (Lys-Gly) (interchain with G-Cter in SUMO2)" evidence="1">
    <location>
        <position position="415"/>
    </location>
</feature>
<feature type="cross-link" description="Glycyl lysine isopeptide (Lys-Gly) (interchain with G-Cter in SUMO2)" evidence="1">
    <location>
        <position position="418"/>
    </location>
</feature>
<comment type="function">
    <text evidence="1">Involved in pre-mRNA splicing as a component of the spliceosome.</text>
</comment>
<comment type="subunit">
    <text evidence="1">Component of the spliceosome B complex. Interacts with PRPF38A (via N-terminal interaction domain).</text>
</comment>
<comment type="subcellular location">
    <subcellularLocation>
        <location evidence="1">Nucleus</location>
    </subcellularLocation>
</comment>
<comment type="similarity">
    <text evidence="3">Belongs to the MFAP1 family.</text>
</comment>
<comment type="sequence caution" evidence="3">
    <conflict type="erroneous termination">
        <sequence resource="EMBL-CDS" id="BAC27936"/>
    </conflict>
    <text>Extended C-terminus.</text>
</comment>
<keyword id="KW-0007">Acetylation</keyword>
<keyword id="KW-1017">Isopeptide bond</keyword>
<keyword id="KW-0507">mRNA processing</keyword>
<keyword id="KW-0508">mRNA splicing</keyword>
<keyword id="KW-0539">Nucleus</keyword>
<keyword id="KW-0597">Phosphoprotein</keyword>
<keyword id="KW-1185">Reference proteome</keyword>
<keyword id="KW-0747">Spliceosome</keyword>
<keyword id="KW-0832">Ubl conjugation</keyword>
<evidence type="ECO:0000250" key="1">
    <source>
        <dbReference type="UniProtKB" id="P55081"/>
    </source>
</evidence>
<evidence type="ECO:0000256" key="2">
    <source>
        <dbReference type="SAM" id="MobiDB-lite"/>
    </source>
</evidence>
<evidence type="ECO:0000305" key="3"/>
<evidence type="ECO:0000312" key="4">
    <source>
        <dbReference type="EMBL" id="BAB28412.3"/>
    </source>
</evidence>
<evidence type="ECO:0000312" key="5">
    <source>
        <dbReference type="EMBL" id="BAB29385.1"/>
    </source>
</evidence>
<evidence type="ECO:0000312" key="6">
    <source>
        <dbReference type="EMBL" id="BAC27936.1"/>
    </source>
</evidence>
<evidence type="ECO:0000312" key="7">
    <source>
        <dbReference type="EMBL" id="BAC34325.1"/>
    </source>
</evidence>
<evidence type="ECO:0000312" key="8">
    <source>
        <dbReference type="EMBL" id="BAC40557.1"/>
    </source>
</evidence>
<evidence type="ECO:0000312" key="9">
    <source>
        <dbReference type="EMBL" id="BAE36142.1"/>
    </source>
</evidence>
<evidence type="ECO:0000312" key="10">
    <source>
        <dbReference type="MGI" id="MGI:1914782"/>
    </source>
</evidence>
<evidence type="ECO:0007744" key="11">
    <source>
    </source>
</evidence>
<evidence type="ECO:0007744" key="12">
    <source>
    </source>
</evidence>
<evidence type="ECO:0007744" key="13">
    <source>
    </source>
</evidence>
<evidence type="ECO:0007744" key="14">
    <source>
    </source>
</evidence>
<evidence type="ECO:0007744" key="15">
    <source>
    </source>
</evidence>